<accession>A0A0D1E921</accession>
<reference evidence="8" key="1">
    <citation type="journal article" date="2006" name="Nature">
        <title>Insights from the genome of the biotrophic fungal plant pathogen Ustilago maydis.</title>
        <authorList>
            <person name="Kaemper J."/>
            <person name="Kahmann R."/>
            <person name="Boelker M."/>
            <person name="Ma L.-J."/>
            <person name="Brefort T."/>
            <person name="Saville B.J."/>
            <person name="Banuett F."/>
            <person name="Kronstad J.W."/>
            <person name="Gold S.E."/>
            <person name="Mueller O."/>
            <person name="Perlin M.H."/>
            <person name="Woesten H.A.B."/>
            <person name="de Vries R."/>
            <person name="Ruiz-Herrera J."/>
            <person name="Reynaga-Pena C.G."/>
            <person name="Snetselaar K."/>
            <person name="McCann M."/>
            <person name="Perez-Martin J."/>
            <person name="Feldbruegge M."/>
            <person name="Basse C.W."/>
            <person name="Steinberg G."/>
            <person name="Ibeas J.I."/>
            <person name="Holloman W."/>
            <person name="Guzman P."/>
            <person name="Farman M.L."/>
            <person name="Stajich J.E."/>
            <person name="Sentandreu R."/>
            <person name="Gonzalez-Prieto J.M."/>
            <person name="Kennell J.C."/>
            <person name="Molina L."/>
            <person name="Schirawski J."/>
            <person name="Mendoza-Mendoza A."/>
            <person name="Greilinger D."/>
            <person name="Muench K."/>
            <person name="Roessel N."/>
            <person name="Scherer M."/>
            <person name="Vranes M."/>
            <person name="Ladendorf O."/>
            <person name="Vincon V."/>
            <person name="Fuchs U."/>
            <person name="Sandrock B."/>
            <person name="Meng S."/>
            <person name="Ho E.C.H."/>
            <person name="Cahill M.J."/>
            <person name="Boyce K.J."/>
            <person name="Klose J."/>
            <person name="Klosterman S.J."/>
            <person name="Deelstra H.J."/>
            <person name="Ortiz-Castellanos L."/>
            <person name="Li W."/>
            <person name="Sanchez-Alonso P."/>
            <person name="Schreier P.H."/>
            <person name="Haeuser-Hahn I."/>
            <person name="Vaupel M."/>
            <person name="Koopmann E."/>
            <person name="Friedrich G."/>
            <person name="Voss H."/>
            <person name="Schlueter T."/>
            <person name="Margolis J."/>
            <person name="Platt D."/>
            <person name="Swimmer C."/>
            <person name="Gnirke A."/>
            <person name="Chen F."/>
            <person name="Vysotskaia V."/>
            <person name="Mannhaupt G."/>
            <person name="Gueldener U."/>
            <person name="Muensterkoetter M."/>
            <person name="Haase D."/>
            <person name="Oesterheld M."/>
            <person name="Mewes H.-W."/>
            <person name="Mauceli E.W."/>
            <person name="DeCaprio D."/>
            <person name="Wade C.M."/>
            <person name="Butler J."/>
            <person name="Young S.K."/>
            <person name="Jaffe D.B."/>
            <person name="Calvo S.E."/>
            <person name="Nusbaum C."/>
            <person name="Galagan J.E."/>
            <person name="Birren B.W."/>
        </authorList>
    </citation>
    <scope>NUCLEOTIDE SEQUENCE [LARGE SCALE GENOMIC DNA]</scope>
    <source>
        <strain>DSM 14603 / FGSC 9021 / UM521</strain>
    </source>
</reference>
<reference evidence="8" key="2">
    <citation type="submission" date="2014-09" db="EMBL/GenBank/DDBJ databases">
        <authorList>
            <person name="Gueldener U."/>
            <person name="Muensterkoetter M."/>
            <person name="Walter M.C."/>
            <person name="Mannhaupt G."/>
            <person name="Kahmann R."/>
        </authorList>
    </citation>
    <scope>GENOME REANNOTATION</scope>
    <source>
        <strain evidence="8">DSM 14603 / FGSC 9021 / UM521</strain>
    </source>
</reference>
<reference evidence="5" key="3">
    <citation type="journal article" date="2024" name="New Phytol.">
        <title>Row1, a member of a new family of conserved fungal proteins involved in infection, is required for appressoria functionality in Ustilago maydis.</title>
        <authorList>
            <person name="Pejenaute-Ochoa M.D."/>
            <person name="Tomas-Gallardo L."/>
            <person name="Ibeas J.I."/>
            <person name="Barrales R.R."/>
        </authorList>
    </citation>
    <scope>FUNCTION</scope>
    <scope>SUBCELLULAR LOCATION</scope>
    <scope>INDUCTION</scope>
    <scope>DISRUPTION PHENOTYPE</scope>
</reference>
<keyword id="KW-1003">Cell membrane</keyword>
<keyword id="KW-0472">Membrane</keyword>
<keyword id="KW-1185">Reference proteome</keyword>
<keyword id="KW-0964">Secreted</keyword>
<keyword id="KW-0732">Signal</keyword>
<keyword id="KW-0812">Transmembrane</keyword>
<keyword id="KW-1133">Transmembrane helix</keyword>
<keyword id="KW-0843">Virulence</keyword>
<organism>
    <name type="scientific">Mycosarcoma maydis</name>
    <name type="common">Corn smut fungus</name>
    <name type="synonym">Ustilago maydis</name>
    <dbReference type="NCBI Taxonomy" id="5270"/>
    <lineage>
        <taxon>Eukaryota</taxon>
        <taxon>Fungi</taxon>
        <taxon>Dikarya</taxon>
        <taxon>Basidiomycota</taxon>
        <taxon>Ustilaginomycotina</taxon>
        <taxon>Ustilaginomycetes</taxon>
        <taxon>Ustilaginales</taxon>
        <taxon>Ustilaginaceae</taxon>
        <taxon>Mycosarcoma</taxon>
    </lineage>
</organism>
<name>ROW1_MYCMD</name>
<sequence length="424" mass="43322">MTKLTLTVALVSALLASGASAQQPTGTGNGPDPRATTDLNRNQPTKSWTQWQPKATYAFSQLPDQYMGANRIESGEGGQPGGEPQSGYNTCARNTWNQDSKCQTAWINSLEDFCLWAPAEYGTVGEKERSGVAYCTTDRHGTRLIPDGTIQGAHFVRTRDYVQVTGVGDFTSILIPDGDDGGEFDPHGADDLGNPIGGIVYTTANPASNGEPFFVSEWTNFMSYNQFCLRACWGERAAAQCEHIYDVMGCRWNIPANYEPGVFETCDGDIGQLQGIYSGSTFRQGDPVTPPAHPAPSSSQCSSVSTIGHGLLARSASASTSSVETSSSSAASSAATDSSASTNSASSMTRVTNSAVSTNVGSGTGSGSGSGSGSGSGSGSGSSSGSSSSGSSSNTQGAASSASSLTISVGLAGLVAIGAAAFAL</sequence>
<protein>
    <recommendedName>
        <fullName evidence="5">Appressorium protein ROW1</fullName>
    </recommendedName>
    <alternativeName>
        <fullName evidence="4">Remodeling of fungal cell wall 1</fullName>
    </alternativeName>
</protein>
<dbReference type="EMBL" id="CM003140">
    <property type="protein sequence ID" value="KIS71881.1"/>
    <property type="molecule type" value="Genomic_DNA"/>
</dbReference>
<dbReference type="RefSeq" id="XP_011386218.1">
    <property type="nucleotide sequence ID" value="XM_011387916.1"/>
</dbReference>
<dbReference type="STRING" id="237631.A0A0D1E921"/>
<dbReference type="EnsemblFungi" id="KIS71881">
    <property type="protein sequence ID" value="KIS71881"/>
    <property type="gene ID" value="UMAG_00309"/>
</dbReference>
<dbReference type="GeneID" id="23561651"/>
<dbReference type="KEGG" id="uma:UMAG_00309"/>
<dbReference type="VEuPathDB" id="FungiDB:UMAG_00309"/>
<dbReference type="eggNOG" id="ENOG502RYV0">
    <property type="taxonomic scope" value="Eukaryota"/>
</dbReference>
<dbReference type="InParanoid" id="A0A0D1E921"/>
<dbReference type="OMA" id="NTCARNT"/>
<dbReference type="OrthoDB" id="1698685at2759"/>
<dbReference type="Proteomes" id="UP000000561">
    <property type="component" value="Chromosome 1"/>
</dbReference>
<dbReference type="GO" id="GO:0005576">
    <property type="term" value="C:extracellular region"/>
    <property type="evidence" value="ECO:0000314"/>
    <property type="project" value="UniProtKB"/>
</dbReference>
<dbReference type="GO" id="GO:0005886">
    <property type="term" value="C:plasma membrane"/>
    <property type="evidence" value="ECO:0000314"/>
    <property type="project" value="UniProtKB"/>
</dbReference>
<dbReference type="GO" id="GO:0075016">
    <property type="term" value="P:appressorium formation"/>
    <property type="evidence" value="ECO:0000315"/>
    <property type="project" value="UniProtKB"/>
</dbReference>
<proteinExistence type="evidence at transcript level"/>
<feature type="signal peptide" evidence="1">
    <location>
        <begin position="1"/>
        <end position="21"/>
    </location>
</feature>
<feature type="chain" id="PRO_5002229712" description="Appressorium protein ROW1" evidence="1">
    <location>
        <begin position="22"/>
        <end position="424"/>
    </location>
</feature>
<feature type="topological domain" description="Extracellular" evidence="6">
    <location>
        <begin position="22"/>
        <end position="403"/>
    </location>
</feature>
<feature type="transmembrane region" description="Helical" evidence="1">
    <location>
        <begin position="404"/>
        <end position="424"/>
    </location>
</feature>
<feature type="region of interest" description="Disordered" evidence="2">
    <location>
        <begin position="19"/>
        <end position="54"/>
    </location>
</feature>
<feature type="region of interest" description="Disordered" evidence="2">
    <location>
        <begin position="69"/>
        <end position="90"/>
    </location>
</feature>
<feature type="region of interest" description="Disordered" evidence="2">
    <location>
        <begin position="278"/>
        <end position="304"/>
    </location>
</feature>
<feature type="region of interest" description="Disordered" evidence="2">
    <location>
        <begin position="327"/>
        <end position="398"/>
    </location>
</feature>
<feature type="compositionally biased region" description="Polar residues" evidence="2">
    <location>
        <begin position="37"/>
        <end position="54"/>
    </location>
</feature>
<feature type="compositionally biased region" description="Low complexity" evidence="2">
    <location>
        <begin position="295"/>
        <end position="304"/>
    </location>
</feature>
<feature type="compositionally biased region" description="Low complexity" evidence="2">
    <location>
        <begin position="327"/>
        <end position="347"/>
    </location>
</feature>
<feature type="compositionally biased region" description="Gly residues" evidence="2">
    <location>
        <begin position="362"/>
        <end position="382"/>
    </location>
</feature>
<feature type="compositionally biased region" description="Low complexity" evidence="2">
    <location>
        <begin position="383"/>
        <end position="398"/>
    </location>
</feature>
<comment type="function">
    <text evidence="3">Plays a role in the formation of the appressorium, a specialized infection structure with the purpose of penetrating the host surface, and is required for proper remodeling of the appressorium wall and vesicle secretion.</text>
</comment>
<comment type="subcellular location">
    <subcellularLocation>
        <location evidence="3">Cell membrane</location>
        <topology evidence="1">Single-pass membrane protein</topology>
    </subcellularLocation>
    <subcellularLocation>
        <location evidence="3">Secreted</location>
    </subcellularLocation>
    <text evidence="3">Localizes to the appressorium.</text>
</comment>
<comment type="induction">
    <text evidence="3">Induced during infection of maize.</text>
</comment>
<comment type="disruption phenotype">
    <text evidence="3">Results in a thickened cell wall with altered glucan composition, and leads to secretory defects (PubMed:38742361). During infection, decreases appressoria formation and plant penetration (PubMed:38742361). Decreases virulence on maize; double knockout of ROW2 exacerbates the effect (PubMed:38742361).</text>
</comment>
<gene>
    <name evidence="4" type="primary">ROW1</name>
    <name evidence="7" type="ORF">UMAG_00309</name>
</gene>
<evidence type="ECO:0000255" key="1"/>
<evidence type="ECO:0000256" key="2">
    <source>
        <dbReference type="SAM" id="MobiDB-lite"/>
    </source>
</evidence>
<evidence type="ECO:0000269" key="3">
    <source>
    </source>
</evidence>
<evidence type="ECO:0000303" key="4">
    <source>
    </source>
</evidence>
<evidence type="ECO:0000305" key="5"/>
<evidence type="ECO:0000305" key="6">
    <source>
    </source>
</evidence>
<evidence type="ECO:0000312" key="7">
    <source>
        <dbReference type="EMBL" id="KIS71881.1"/>
    </source>
</evidence>
<evidence type="ECO:0000312" key="8">
    <source>
        <dbReference type="Proteomes" id="UP000000561"/>
    </source>
</evidence>